<name>PSBN_SORBI</name>
<comment type="function">
    <text evidence="1">May play a role in photosystem I and II biogenesis.</text>
</comment>
<comment type="subcellular location">
    <subcellularLocation>
        <location evidence="1">Plastid</location>
        <location evidence="1">Chloroplast thylakoid membrane</location>
        <topology evidence="1">Single-pass membrane protein</topology>
    </subcellularLocation>
</comment>
<comment type="similarity">
    <text evidence="1">Belongs to the PsbN family.</text>
</comment>
<comment type="caution">
    <text evidence="1">Originally thought to be a component of PSII; based on experiments in Synechocystis, N.tabacum and barley, and its absence from PSII in T.elongatus and T.vulcanus, this is probably not true.</text>
</comment>
<feature type="chain" id="PRO_0000276281" description="Protein PsbN">
    <location>
        <begin position="1"/>
        <end position="43"/>
    </location>
</feature>
<feature type="transmembrane region" description="Helical" evidence="1">
    <location>
        <begin position="5"/>
        <end position="27"/>
    </location>
</feature>
<gene>
    <name evidence="1" type="primary">psbN</name>
</gene>
<sequence length="43" mass="4662">METATLVAISISGLLVSFTGYALYTAFGQPSQQLRDPFEEHGD</sequence>
<protein>
    <recommendedName>
        <fullName evidence="1">Protein PsbN</fullName>
    </recommendedName>
</protein>
<reference key="1">
    <citation type="journal article" date="2007" name="Theor. Appl. Genet.">
        <title>Complete chloroplast genome sequences of Hordeum vulgare, Sorghum bicolor and Agrostis stolonifera, and comparative analyses with other grass genomes.</title>
        <authorList>
            <person name="Saski C."/>
            <person name="Lee S.-B."/>
            <person name="Fjellheim S."/>
            <person name="Guda C."/>
            <person name="Jansen R.K."/>
            <person name="Luo H."/>
            <person name="Tomkins J."/>
            <person name="Rognli O.A."/>
            <person name="Daniell H."/>
            <person name="Clarke J.L."/>
        </authorList>
    </citation>
    <scope>NUCLEOTIDE SEQUENCE [LARGE SCALE GENOMIC DNA]</scope>
    <source>
        <strain>cv. BTx623</strain>
    </source>
</reference>
<accession>A1E9V2</accession>
<geneLocation type="chloroplast"/>
<organism>
    <name type="scientific">Sorghum bicolor</name>
    <name type="common">Sorghum</name>
    <name type="synonym">Sorghum vulgare</name>
    <dbReference type="NCBI Taxonomy" id="4558"/>
    <lineage>
        <taxon>Eukaryota</taxon>
        <taxon>Viridiplantae</taxon>
        <taxon>Streptophyta</taxon>
        <taxon>Embryophyta</taxon>
        <taxon>Tracheophyta</taxon>
        <taxon>Spermatophyta</taxon>
        <taxon>Magnoliopsida</taxon>
        <taxon>Liliopsida</taxon>
        <taxon>Poales</taxon>
        <taxon>Poaceae</taxon>
        <taxon>PACMAD clade</taxon>
        <taxon>Panicoideae</taxon>
        <taxon>Andropogonodae</taxon>
        <taxon>Andropogoneae</taxon>
        <taxon>Sorghinae</taxon>
        <taxon>Sorghum</taxon>
    </lineage>
</organism>
<evidence type="ECO:0000255" key="1">
    <source>
        <dbReference type="HAMAP-Rule" id="MF_00293"/>
    </source>
</evidence>
<proteinExistence type="inferred from homology"/>
<dbReference type="EMBL" id="EF115542">
    <property type="protein sequence ID" value="ABK79523.1"/>
    <property type="molecule type" value="Genomic_DNA"/>
</dbReference>
<dbReference type="RefSeq" id="YP_899435.1">
    <property type="nucleotide sequence ID" value="NC_008602.1"/>
</dbReference>
<dbReference type="SMR" id="A1E9V2"/>
<dbReference type="FunCoup" id="A1E9V2">
    <property type="interactions" value="67"/>
</dbReference>
<dbReference type="STRING" id="4558.A1E9V2"/>
<dbReference type="EnsemblPlants" id="KXG32557">
    <property type="protein sequence ID" value="KXG32557"/>
    <property type="gene ID" value="SORBI_3003G168900"/>
</dbReference>
<dbReference type="EnsemblPlants" id="KXG38424">
    <property type="protein sequence ID" value="KXG38424"/>
    <property type="gene ID" value="SORBI_3001G231300"/>
</dbReference>
<dbReference type="GeneID" id="4549219"/>
<dbReference type="Gramene" id="KXG32557">
    <property type="protein sequence ID" value="KXG32557"/>
    <property type="gene ID" value="SORBI_3003G168900"/>
</dbReference>
<dbReference type="Gramene" id="KXG38424">
    <property type="protein sequence ID" value="KXG38424"/>
    <property type="gene ID" value="SORBI_3001G231300"/>
</dbReference>
<dbReference type="KEGG" id="sbi:4549219"/>
<dbReference type="InParanoid" id="A1E9V2"/>
<dbReference type="OrthoDB" id="1860403at2759"/>
<dbReference type="Proteomes" id="UP000000768">
    <property type="component" value="Chloroplast"/>
</dbReference>
<dbReference type="ExpressionAtlas" id="A1E9V2">
    <property type="expression patterns" value="baseline"/>
</dbReference>
<dbReference type="GO" id="GO:0009535">
    <property type="term" value="C:chloroplast thylakoid membrane"/>
    <property type="evidence" value="ECO:0007669"/>
    <property type="project" value="UniProtKB-SubCell"/>
</dbReference>
<dbReference type="GO" id="GO:0015979">
    <property type="term" value="P:photosynthesis"/>
    <property type="evidence" value="ECO:0007669"/>
    <property type="project" value="InterPro"/>
</dbReference>
<dbReference type="HAMAP" id="MF_00293">
    <property type="entry name" value="PSII_PsbN"/>
    <property type="match status" value="1"/>
</dbReference>
<dbReference type="InterPro" id="IPR003398">
    <property type="entry name" value="PSII_PsbN"/>
</dbReference>
<dbReference type="PANTHER" id="PTHR35326">
    <property type="entry name" value="PROTEIN PSBN"/>
    <property type="match status" value="1"/>
</dbReference>
<dbReference type="PANTHER" id="PTHR35326:SF3">
    <property type="entry name" value="PROTEIN PSBN"/>
    <property type="match status" value="1"/>
</dbReference>
<dbReference type="Pfam" id="PF02468">
    <property type="entry name" value="PsbN"/>
    <property type="match status" value="1"/>
</dbReference>
<keyword id="KW-0150">Chloroplast</keyword>
<keyword id="KW-0472">Membrane</keyword>
<keyword id="KW-0934">Plastid</keyword>
<keyword id="KW-1185">Reference proteome</keyword>
<keyword id="KW-0793">Thylakoid</keyword>
<keyword id="KW-0812">Transmembrane</keyword>
<keyword id="KW-1133">Transmembrane helix</keyword>